<protein>
    <recommendedName>
        <fullName evidence="1">Mannosyl-3-phosphoglycerate phosphatase</fullName>
        <shortName evidence="1">MPGP</shortName>
        <ecNumber evidence="1">3.1.3.70</ecNumber>
    </recommendedName>
</protein>
<dbReference type="EC" id="3.1.3.70" evidence="1"/>
<dbReference type="EMBL" id="CP000970">
    <property type="protein sequence ID" value="ACB20122.1"/>
    <property type="molecule type" value="Genomic_DNA"/>
</dbReference>
<dbReference type="RefSeq" id="WP_000491515.1">
    <property type="nucleotide sequence ID" value="NC_010498.1"/>
</dbReference>
<dbReference type="SMR" id="B1LQQ4"/>
<dbReference type="KEGG" id="ecm:EcSMS35_1229"/>
<dbReference type="HOGENOM" id="CLU_063016_1_0_6"/>
<dbReference type="Proteomes" id="UP000007011">
    <property type="component" value="Chromosome"/>
</dbReference>
<dbReference type="GO" id="GO:0005829">
    <property type="term" value="C:cytosol"/>
    <property type="evidence" value="ECO:0007669"/>
    <property type="project" value="TreeGrafter"/>
</dbReference>
<dbReference type="GO" id="GO:0000287">
    <property type="term" value="F:magnesium ion binding"/>
    <property type="evidence" value="ECO:0007669"/>
    <property type="project" value="TreeGrafter"/>
</dbReference>
<dbReference type="GO" id="GO:0050531">
    <property type="term" value="F:mannosyl-3-phosphoglycerate phosphatase activity"/>
    <property type="evidence" value="ECO:0007669"/>
    <property type="project" value="UniProtKB-UniRule"/>
</dbReference>
<dbReference type="GO" id="GO:0051479">
    <property type="term" value="P:mannosylglycerate biosynthetic process"/>
    <property type="evidence" value="ECO:0007669"/>
    <property type="project" value="InterPro"/>
</dbReference>
<dbReference type="CDD" id="cd07507">
    <property type="entry name" value="HAD_Pase"/>
    <property type="match status" value="1"/>
</dbReference>
<dbReference type="Gene3D" id="3.40.50.1000">
    <property type="entry name" value="HAD superfamily/HAD-like"/>
    <property type="match status" value="1"/>
</dbReference>
<dbReference type="Gene3D" id="3.30.980.20">
    <property type="entry name" value="Putative mannosyl-3-phosphoglycerate phosphatase, domain 2"/>
    <property type="match status" value="1"/>
</dbReference>
<dbReference type="HAMAP" id="MF_00617">
    <property type="entry name" value="MPGP_rel"/>
    <property type="match status" value="1"/>
</dbReference>
<dbReference type="InterPro" id="IPR036412">
    <property type="entry name" value="HAD-like_sf"/>
</dbReference>
<dbReference type="InterPro" id="IPR006381">
    <property type="entry name" value="HAD-SF-IIB-MPGP"/>
</dbReference>
<dbReference type="InterPro" id="IPR006379">
    <property type="entry name" value="HAD-SF_hydro_IIB"/>
</dbReference>
<dbReference type="InterPro" id="IPR023214">
    <property type="entry name" value="HAD_sf"/>
</dbReference>
<dbReference type="InterPro" id="IPR012815">
    <property type="entry name" value="MPG_Pase"/>
</dbReference>
<dbReference type="NCBIfam" id="TIGR01484">
    <property type="entry name" value="HAD-SF-IIB"/>
    <property type="match status" value="1"/>
</dbReference>
<dbReference type="NCBIfam" id="TIGR01486">
    <property type="entry name" value="HAD-SF-IIB-MPGP"/>
    <property type="match status" value="1"/>
</dbReference>
<dbReference type="NCBIfam" id="TIGR02463">
    <property type="entry name" value="MPGP_rel"/>
    <property type="match status" value="1"/>
</dbReference>
<dbReference type="NCBIfam" id="NF002976">
    <property type="entry name" value="PRK03669.1"/>
    <property type="match status" value="1"/>
</dbReference>
<dbReference type="PANTHER" id="PTHR10000:SF8">
    <property type="entry name" value="HAD SUPERFAMILY HYDROLASE-LIKE, TYPE 3"/>
    <property type="match status" value="1"/>
</dbReference>
<dbReference type="PANTHER" id="PTHR10000">
    <property type="entry name" value="PHOSPHOSERINE PHOSPHATASE"/>
    <property type="match status" value="1"/>
</dbReference>
<dbReference type="Pfam" id="PF08282">
    <property type="entry name" value="Hydrolase_3"/>
    <property type="match status" value="1"/>
</dbReference>
<dbReference type="SFLD" id="SFLDG01142">
    <property type="entry name" value="C2.B.2:_Mannosyl-3-phosphoglyc"/>
    <property type="match status" value="1"/>
</dbReference>
<dbReference type="SFLD" id="SFLDG01140">
    <property type="entry name" value="C2.B:_Phosphomannomutase_and_P"/>
    <property type="match status" value="1"/>
</dbReference>
<dbReference type="SUPFAM" id="SSF56784">
    <property type="entry name" value="HAD-like"/>
    <property type="match status" value="1"/>
</dbReference>
<reference key="1">
    <citation type="journal article" date="2008" name="J. Bacteriol.">
        <title>Insights into the environmental resistance gene pool from the genome sequence of the multidrug-resistant environmental isolate Escherichia coli SMS-3-5.</title>
        <authorList>
            <person name="Fricke W.F."/>
            <person name="Wright M.S."/>
            <person name="Lindell A.H."/>
            <person name="Harkins D.M."/>
            <person name="Baker-Austin C."/>
            <person name="Ravel J."/>
            <person name="Stepanauskas R."/>
        </authorList>
    </citation>
    <scope>NUCLEOTIDE SEQUENCE [LARGE SCALE GENOMIC DNA]</scope>
    <source>
        <strain>SMS-3-5 / SECEC</strain>
    </source>
</reference>
<feature type="chain" id="PRO_1000130437" description="Mannosyl-3-phosphoglycerate phosphatase">
    <location>
        <begin position="1"/>
        <end position="271"/>
    </location>
</feature>
<feature type="active site" description="Nucleophile" evidence="1">
    <location>
        <position position="13"/>
    </location>
</feature>
<feature type="binding site" evidence="1">
    <location>
        <position position="13"/>
    </location>
    <ligand>
        <name>Mg(2+)</name>
        <dbReference type="ChEBI" id="CHEBI:18420"/>
    </ligand>
</feature>
<feature type="binding site" evidence="1">
    <location>
        <position position="15"/>
    </location>
    <ligand>
        <name>Mg(2+)</name>
        <dbReference type="ChEBI" id="CHEBI:18420"/>
    </ligand>
</feature>
<feature type="binding site" evidence="1">
    <location>
        <position position="214"/>
    </location>
    <ligand>
        <name>Mg(2+)</name>
        <dbReference type="ChEBI" id="CHEBI:18420"/>
    </ligand>
</feature>
<evidence type="ECO:0000255" key="1">
    <source>
        <dbReference type="HAMAP-Rule" id="MF_00617"/>
    </source>
</evidence>
<sequence length="271" mass="30442">MFSIQQPLLVFSDLDGTLLDSHSYDWQPAAPWLSRLREGNVPVILCSSKTSAEMLYLQKTLGLQGLPLIAENGAVIQLAEQWQDIDGFPRIISGISHGEISQVLNTLREKEHFKFTTFDDVDDATIAEWTGLSRSQAALTQLHEASVTLIWRDSDERMAQFTARLNELGLQFMQGARFWHVLDASAGKDQAANWIIATYQQLSGKRPTTLGLGDGPNDAPLLEVMDYAVIVKGLNREGVHLHDEDPTRVWRTQREGPEGWREGLDHFFSAR</sequence>
<name>MPGP_ECOSM</name>
<organism>
    <name type="scientific">Escherichia coli (strain SMS-3-5 / SECEC)</name>
    <dbReference type="NCBI Taxonomy" id="439855"/>
    <lineage>
        <taxon>Bacteria</taxon>
        <taxon>Pseudomonadati</taxon>
        <taxon>Pseudomonadota</taxon>
        <taxon>Gammaproteobacteria</taxon>
        <taxon>Enterobacterales</taxon>
        <taxon>Enterobacteriaceae</taxon>
        <taxon>Escherichia</taxon>
    </lineage>
</organism>
<keyword id="KW-0963">Cytoplasm</keyword>
<keyword id="KW-0378">Hydrolase</keyword>
<keyword id="KW-0460">Magnesium</keyword>
<keyword id="KW-0479">Metal-binding</keyword>
<accession>B1LQQ4</accession>
<proteinExistence type="inferred from homology"/>
<comment type="catalytic activity">
    <reaction evidence="1">
        <text>2-O-(alpha-D-mannosyl)-3-phosphoglycerate + H2O = (2R)-2-O-(alpha-D-mannosyl)-glycerate + phosphate</text>
        <dbReference type="Rhea" id="RHEA:19309"/>
        <dbReference type="ChEBI" id="CHEBI:15377"/>
        <dbReference type="ChEBI" id="CHEBI:43474"/>
        <dbReference type="ChEBI" id="CHEBI:57541"/>
        <dbReference type="ChEBI" id="CHEBI:57744"/>
        <dbReference type="EC" id="3.1.3.70"/>
    </reaction>
</comment>
<comment type="cofactor">
    <cofactor evidence="1">
        <name>Mg(2+)</name>
        <dbReference type="ChEBI" id="CHEBI:18420"/>
    </cofactor>
</comment>
<comment type="subcellular location">
    <subcellularLocation>
        <location evidence="1">Cytoplasm</location>
    </subcellularLocation>
</comment>
<comment type="similarity">
    <text evidence="1">Belongs to the HAD-like hydrolase superfamily. MPGP family.</text>
</comment>
<gene>
    <name type="ordered locus">EcSMS35_1229</name>
</gene>